<organism>
    <name type="scientific">Kluyveromyces lactis (strain ATCC 8585 / CBS 2359 / DSM 70799 / NBRC 1267 / NRRL Y-1140 / WM37)</name>
    <name type="common">Yeast</name>
    <name type="synonym">Candida sphaerica</name>
    <dbReference type="NCBI Taxonomy" id="284590"/>
    <lineage>
        <taxon>Eukaryota</taxon>
        <taxon>Fungi</taxon>
        <taxon>Dikarya</taxon>
        <taxon>Ascomycota</taxon>
        <taxon>Saccharomycotina</taxon>
        <taxon>Saccharomycetes</taxon>
        <taxon>Saccharomycetales</taxon>
        <taxon>Saccharomycetaceae</taxon>
        <taxon>Kluyveromyces</taxon>
    </lineage>
</organism>
<dbReference type="EMBL" id="CR382125">
    <property type="protein sequence ID" value="CAH00126.1"/>
    <property type="molecule type" value="Genomic_DNA"/>
</dbReference>
<dbReference type="RefSeq" id="XP_455039.1">
    <property type="nucleotide sequence ID" value="XM_455039.1"/>
</dbReference>
<dbReference type="SMR" id="Q6CM00"/>
<dbReference type="FunCoup" id="Q6CM00">
    <property type="interactions" value="1418"/>
</dbReference>
<dbReference type="STRING" id="284590.Q6CM00"/>
<dbReference type="PaxDb" id="284590-Q6CM00"/>
<dbReference type="KEGG" id="kla:KLLA0_E24135g"/>
<dbReference type="eggNOG" id="KOG1490">
    <property type="taxonomic scope" value="Eukaryota"/>
</dbReference>
<dbReference type="HOGENOM" id="CLU_011784_4_1_1"/>
<dbReference type="InParanoid" id="Q6CM00"/>
<dbReference type="OMA" id="EWKNDVM"/>
<dbReference type="Proteomes" id="UP000000598">
    <property type="component" value="Chromosome E"/>
</dbReference>
<dbReference type="GO" id="GO:0005730">
    <property type="term" value="C:nucleolus"/>
    <property type="evidence" value="ECO:0007669"/>
    <property type="project" value="UniProtKB-SubCell"/>
</dbReference>
<dbReference type="GO" id="GO:0005525">
    <property type="term" value="F:GTP binding"/>
    <property type="evidence" value="ECO:0007669"/>
    <property type="project" value="UniProtKB-KW"/>
</dbReference>
<dbReference type="GO" id="GO:0042254">
    <property type="term" value="P:ribosome biogenesis"/>
    <property type="evidence" value="ECO:0007669"/>
    <property type="project" value="UniProtKB-KW"/>
</dbReference>
<dbReference type="CDD" id="cd01897">
    <property type="entry name" value="NOG"/>
    <property type="match status" value="1"/>
</dbReference>
<dbReference type="FunFam" id="3.40.50.300:FF:000496">
    <property type="entry name" value="Nucleolar GTP-binding protein 1"/>
    <property type="match status" value="1"/>
</dbReference>
<dbReference type="Gene3D" id="1.20.120.1190">
    <property type="match status" value="1"/>
</dbReference>
<dbReference type="Gene3D" id="3.40.50.300">
    <property type="entry name" value="P-loop containing nucleotide triphosphate hydrolases"/>
    <property type="match status" value="1"/>
</dbReference>
<dbReference type="InterPro" id="IPR031167">
    <property type="entry name" value="G_OBG"/>
</dbReference>
<dbReference type="InterPro" id="IPR006073">
    <property type="entry name" value="GTP-bd"/>
</dbReference>
<dbReference type="InterPro" id="IPR024926">
    <property type="entry name" value="NOG1"/>
</dbReference>
<dbReference type="InterPro" id="IPR041623">
    <property type="entry name" value="NOG1_N"/>
</dbReference>
<dbReference type="InterPro" id="IPR010674">
    <property type="entry name" value="NOG1_Rossman_fold_dom"/>
</dbReference>
<dbReference type="InterPro" id="IPR012973">
    <property type="entry name" value="NOG_C"/>
</dbReference>
<dbReference type="InterPro" id="IPR027417">
    <property type="entry name" value="P-loop_NTPase"/>
</dbReference>
<dbReference type="InterPro" id="IPR005225">
    <property type="entry name" value="Small_GTP-bd"/>
</dbReference>
<dbReference type="NCBIfam" id="TIGR00231">
    <property type="entry name" value="small_GTP"/>
    <property type="match status" value="1"/>
</dbReference>
<dbReference type="PANTHER" id="PTHR45759">
    <property type="entry name" value="NUCLEOLAR GTP-BINDING PROTEIN 1"/>
    <property type="match status" value="1"/>
</dbReference>
<dbReference type="Pfam" id="PF06858">
    <property type="entry name" value="NOG1"/>
    <property type="match status" value="1"/>
</dbReference>
<dbReference type="Pfam" id="PF17835">
    <property type="entry name" value="NOG1_N"/>
    <property type="match status" value="1"/>
</dbReference>
<dbReference type="Pfam" id="PF08155">
    <property type="entry name" value="NOGCT"/>
    <property type="match status" value="1"/>
</dbReference>
<dbReference type="PIRSF" id="PIRSF038919">
    <property type="entry name" value="NOG1"/>
    <property type="match status" value="1"/>
</dbReference>
<dbReference type="PRINTS" id="PR00326">
    <property type="entry name" value="GTP1OBG"/>
</dbReference>
<dbReference type="SUPFAM" id="SSF52540">
    <property type="entry name" value="P-loop containing nucleoside triphosphate hydrolases"/>
    <property type="match status" value="1"/>
</dbReference>
<dbReference type="PROSITE" id="PS51710">
    <property type="entry name" value="G_OBG"/>
    <property type="match status" value="1"/>
</dbReference>
<name>NOG1_KLULA</name>
<sequence length="643" mass="73937">MQLSWKDIPTVAPANDLLDIVLNRTQRKTPTVIRPGFNITRIRAFYMRKVKFTGEGFVEKFDDILKGFPNINDVHPFHRDLMDTLYEKNHFKVSLAAVSRAKTLVEQVERDYTRLLKFGQSLFQCKQLKRAALGRMATIVKKLKDPLVYLEQVRQHLGRMPSIDPNTRTLLICGYPNVGKSSFLRCITKADVEVQPYAFTTKSLYVGHFDYKYLRFQAIDTPGILDRPTDEMNNVEMQSIYAIAHLRSTVMYFMDLSEQCGFSIEAQVKLFHSIKPLFANKSVMVVINKTDIIKPEDLDEERKKLLDTVLEVPGVEIMTTSCHEEDNVMAVRNKACEKLLASRIENKLKSQARITNVLNKIHVAQPQKRDDGIDRTPYIPEAIAKMKKYDPEDPNRRKLAKEIEIENGGAGVYNVNLKDKYLLEDDEWKNDVMPEILDGKNVYDFLDPEIAIKLQALEEEEERLESEGFYESDEEETYEGFDADEISEIREKAEWIRDRQKKMINASRNRKALKNRGTMPRSKLAKTYGDMEKHMSSLGHDMTALQDKQRVAAEKNRYEQTGADVVYGDQEDSAPAGKLRQTDRLTDGVADGSMRSKAERMAKLERRERNRMARAGESDRHATASLPKHLFSGKRGVGKTDFR</sequence>
<reference key="1">
    <citation type="journal article" date="2004" name="Nature">
        <title>Genome evolution in yeasts.</title>
        <authorList>
            <person name="Dujon B."/>
            <person name="Sherman D."/>
            <person name="Fischer G."/>
            <person name="Durrens P."/>
            <person name="Casaregola S."/>
            <person name="Lafontaine I."/>
            <person name="de Montigny J."/>
            <person name="Marck C."/>
            <person name="Neuveglise C."/>
            <person name="Talla E."/>
            <person name="Goffard N."/>
            <person name="Frangeul L."/>
            <person name="Aigle M."/>
            <person name="Anthouard V."/>
            <person name="Babour A."/>
            <person name="Barbe V."/>
            <person name="Barnay S."/>
            <person name="Blanchin S."/>
            <person name="Beckerich J.-M."/>
            <person name="Beyne E."/>
            <person name="Bleykasten C."/>
            <person name="Boisrame A."/>
            <person name="Boyer J."/>
            <person name="Cattolico L."/>
            <person name="Confanioleri F."/>
            <person name="de Daruvar A."/>
            <person name="Despons L."/>
            <person name="Fabre E."/>
            <person name="Fairhead C."/>
            <person name="Ferry-Dumazet H."/>
            <person name="Groppi A."/>
            <person name="Hantraye F."/>
            <person name="Hennequin C."/>
            <person name="Jauniaux N."/>
            <person name="Joyet P."/>
            <person name="Kachouri R."/>
            <person name="Kerrest A."/>
            <person name="Koszul R."/>
            <person name="Lemaire M."/>
            <person name="Lesur I."/>
            <person name="Ma L."/>
            <person name="Muller H."/>
            <person name="Nicaud J.-M."/>
            <person name="Nikolski M."/>
            <person name="Oztas S."/>
            <person name="Ozier-Kalogeropoulos O."/>
            <person name="Pellenz S."/>
            <person name="Potier S."/>
            <person name="Richard G.-F."/>
            <person name="Straub M.-L."/>
            <person name="Suleau A."/>
            <person name="Swennen D."/>
            <person name="Tekaia F."/>
            <person name="Wesolowski-Louvel M."/>
            <person name="Westhof E."/>
            <person name="Wirth B."/>
            <person name="Zeniou-Meyer M."/>
            <person name="Zivanovic Y."/>
            <person name="Bolotin-Fukuhara M."/>
            <person name="Thierry A."/>
            <person name="Bouchier C."/>
            <person name="Caudron B."/>
            <person name="Scarpelli C."/>
            <person name="Gaillardin C."/>
            <person name="Weissenbach J."/>
            <person name="Wincker P."/>
            <person name="Souciet J.-L."/>
        </authorList>
    </citation>
    <scope>NUCLEOTIDE SEQUENCE [LARGE SCALE GENOMIC DNA]</scope>
    <source>
        <strain>ATCC 8585 / CBS 2359 / DSM 70799 / NBRC 1267 / NRRL Y-1140 / WM37</strain>
    </source>
</reference>
<proteinExistence type="inferred from homology"/>
<accession>Q6CM00</accession>
<gene>
    <name type="primary">NOG1</name>
    <name type="ordered locus">KLLA0E24178g</name>
</gene>
<feature type="chain" id="PRO_0000195033" description="Nucleolar GTP-binding protein 1">
    <location>
        <begin position="1"/>
        <end position="643"/>
    </location>
</feature>
<feature type="domain" description="OBG-type G" evidence="2">
    <location>
        <begin position="168"/>
        <end position="340"/>
    </location>
</feature>
<feature type="region of interest" description="Disordered" evidence="3">
    <location>
        <begin position="568"/>
        <end position="643"/>
    </location>
</feature>
<feature type="compositionally biased region" description="Basic and acidic residues" evidence="3">
    <location>
        <begin position="594"/>
        <end position="622"/>
    </location>
</feature>
<feature type="binding site" evidence="2">
    <location>
        <begin position="174"/>
        <end position="181"/>
    </location>
    <ligand>
        <name>GTP</name>
        <dbReference type="ChEBI" id="CHEBI:37565"/>
    </ligand>
</feature>
<feature type="binding site" evidence="2">
    <location>
        <begin position="220"/>
        <end position="224"/>
    </location>
    <ligand>
        <name>GTP</name>
        <dbReference type="ChEBI" id="CHEBI:37565"/>
    </ligand>
</feature>
<feature type="binding site" evidence="2">
    <location>
        <begin position="288"/>
        <end position="291"/>
    </location>
    <ligand>
        <name>GTP</name>
        <dbReference type="ChEBI" id="CHEBI:37565"/>
    </ligand>
</feature>
<protein>
    <recommendedName>
        <fullName>Nucleolar GTP-binding protein 1</fullName>
    </recommendedName>
</protein>
<evidence type="ECO:0000250" key="1"/>
<evidence type="ECO:0000255" key="2">
    <source>
        <dbReference type="PROSITE-ProRule" id="PRU01047"/>
    </source>
</evidence>
<evidence type="ECO:0000256" key="3">
    <source>
        <dbReference type="SAM" id="MobiDB-lite"/>
    </source>
</evidence>
<comment type="function">
    <text evidence="1">Involved in the biogenesis of the 60S ribosomal subunit.</text>
</comment>
<comment type="subcellular location">
    <subcellularLocation>
        <location evidence="1">Nucleus</location>
        <location evidence="1">Nucleolus</location>
    </subcellularLocation>
</comment>
<comment type="similarity">
    <text evidence="2">Belongs to the TRAFAC class OBG-HflX-like GTPase superfamily. OBG GTPase family. NOG subfamily.</text>
</comment>
<keyword id="KW-0342">GTP-binding</keyword>
<keyword id="KW-0547">Nucleotide-binding</keyword>
<keyword id="KW-0539">Nucleus</keyword>
<keyword id="KW-1185">Reference proteome</keyword>
<keyword id="KW-0690">Ribosome biogenesis</keyword>